<evidence type="ECO:0000255" key="1">
    <source>
        <dbReference type="HAMAP-Rule" id="MF_01134"/>
    </source>
</evidence>
<evidence type="ECO:0000305" key="2"/>
<keyword id="KW-0484">Methanogenesis</keyword>
<accession>Q49164</accession>
<name>ACDE2_METMA</name>
<sequence length="170" mass="18427">MVDTTKNTKLFTSYGVSTSKTVAPEMAAKLISKAKRPLLMVGTLALDPEILDRVVKISKTANIPIAATGSSLAALADKDVDAKYINAHMLGFYLTDPNWPGLDGNGNYDMVISIGFKKFYINQVLSAAKNFSNVKAIAIERGYIQNATMSFGNLSKAEHYAALDELVDFL</sequence>
<feature type="chain" id="PRO_0000155093" description="Acetyl-CoA decarbonylase/synthase complex subunit epsilon 2">
    <location>
        <begin position="1"/>
        <end position="170"/>
    </location>
</feature>
<gene>
    <name type="primary">cdhB2</name>
    <name type="ordered locus">MM_0685</name>
</gene>
<comment type="function">
    <text evidence="1">Part of a complex that catalyzes the reversible cleavage of acetyl-CoA, allowing growth on acetate as sole source of carbon and energy. The alpha-epsilon subcomponent functions as a carbon monoxide dehydrogenase. The precise role of the epsilon subunit is unclear; it may have a stabilizing role within the alpha(2)epsilon(2) component and/or be involved in electron transfer to FAD during a potential FAD-mediated CO oxidation.</text>
</comment>
<comment type="biophysicochemical properties">
    <phDependence>
        <text>Optimum pH is 8-9.</text>
    </phDependence>
</comment>
<comment type="pathway">
    <text evidence="1">One-carbon metabolism; methanogenesis from acetate.</text>
</comment>
<comment type="subunit">
    <text evidence="1">Heterotetramer of two alpha and two epsilon subunits. The ACDS complex is made up of alpha, epsilon, beta, gamma and delta subunits with a probable stoichiometry of (alpha(2)epsilon(2))(4)-beta(8)-(gamma(1)delta(1))(8).</text>
</comment>
<comment type="similarity">
    <text evidence="1">Belongs to the CdhB family.</text>
</comment>
<comment type="sequence caution" evidence="2">
    <conflict type="erroneous initiation">
        <sequence resource="EMBL-CDS" id="AAM30381"/>
    </conflict>
</comment>
<dbReference type="EMBL" id="L26486">
    <property type="protein sequence ID" value="AAC37043.1"/>
    <property type="molecule type" value="Genomic_DNA"/>
</dbReference>
<dbReference type="EMBL" id="AE008384">
    <property type="protein sequence ID" value="AAM30381.1"/>
    <property type="status" value="ALT_INIT"/>
    <property type="molecule type" value="Genomic_DNA"/>
</dbReference>
<dbReference type="SMR" id="Q49164"/>
<dbReference type="KEGG" id="mma:MM_0685"/>
<dbReference type="PATRIC" id="fig|192952.21.peg.816"/>
<dbReference type="eggNOG" id="arCOG04408">
    <property type="taxonomic scope" value="Archaea"/>
</dbReference>
<dbReference type="HOGENOM" id="CLU_123700_0_0_2"/>
<dbReference type="UniPathway" id="UPA00642"/>
<dbReference type="Proteomes" id="UP000000595">
    <property type="component" value="Chromosome"/>
</dbReference>
<dbReference type="GO" id="GO:0019385">
    <property type="term" value="P:methanogenesis, from acetate"/>
    <property type="evidence" value="ECO:0007669"/>
    <property type="project" value="UniProtKB-UniRule"/>
</dbReference>
<dbReference type="Gene3D" id="3.40.50.1220">
    <property type="entry name" value="TPP-binding domain"/>
    <property type="match status" value="1"/>
</dbReference>
<dbReference type="HAMAP" id="MF_01134">
    <property type="entry name" value="CdhB"/>
    <property type="match status" value="1"/>
</dbReference>
<dbReference type="InterPro" id="IPR003704">
    <property type="entry name" value="CdhB"/>
</dbReference>
<dbReference type="InterPro" id="IPR029035">
    <property type="entry name" value="DHS-like_NAD/FAD-binding_dom"/>
</dbReference>
<dbReference type="NCBIfam" id="TIGR00315">
    <property type="entry name" value="cdhB"/>
    <property type="match status" value="1"/>
</dbReference>
<dbReference type="Pfam" id="PF02552">
    <property type="entry name" value="CO_dh"/>
    <property type="match status" value="1"/>
</dbReference>
<dbReference type="PIRSF" id="PIRSF006035">
    <property type="entry name" value="CO_dh_b_ACDS_e"/>
    <property type="match status" value="1"/>
</dbReference>
<dbReference type="SUPFAM" id="SSF52467">
    <property type="entry name" value="DHS-like NAD/FAD-binding domain"/>
    <property type="match status" value="1"/>
</dbReference>
<organism>
    <name type="scientific">Methanosarcina mazei (strain ATCC BAA-159 / DSM 3647 / Goe1 / Go1 / JCM 11833 / OCM 88)</name>
    <name type="common">Methanosarcina frisia</name>
    <dbReference type="NCBI Taxonomy" id="192952"/>
    <lineage>
        <taxon>Archaea</taxon>
        <taxon>Methanobacteriati</taxon>
        <taxon>Methanobacteriota</taxon>
        <taxon>Stenosarchaea group</taxon>
        <taxon>Methanomicrobia</taxon>
        <taxon>Methanosarcinales</taxon>
        <taxon>Methanosarcinaceae</taxon>
        <taxon>Methanosarcina</taxon>
    </lineage>
</organism>
<protein>
    <recommendedName>
        <fullName evidence="1">Acetyl-CoA decarbonylase/synthase complex subunit epsilon 2</fullName>
        <shortName evidence="1">ACDS complex subunit epsilon 2</shortName>
    </recommendedName>
    <alternativeName>
        <fullName evidence="1">ACDS complex carbon monoxide dehydrogenase subunit epsilon 2</fullName>
        <shortName evidence="1">ACDS CODH subunit epsilon 2</shortName>
    </alternativeName>
</protein>
<reference key="1">
    <citation type="journal article" date="1996" name="J. Biol. Chem.">
        <title>Carbon monoxide dehydrogenase from Methanosarcina frisia Go1. Characterization of the enzyme and the regulated expression of two operon-like cdh gene clusters.</title>
        <authorList>
            <person name="Eggen R.I.L."/>
            <person name="van Kranenburg R."/>
            <person name="Vriesema A.J.M."/>
            <person name="Geerling A.C.M."/>
            <person name="Verhagen M.F.J.M."/>
            <person name="Hagen W.R."/>
            <person name="de Vos W.M."/>
        </authorList>
    </citation>
    <scope>NUCLEOTIDE SEQUENCE [GENOMIC DNA]</scope>
    <source>
        <strain>ATCC BAA-159 / DSM 3647 / Goe1 / Go1 / JCM 11833 / OCM 88</strain>
    </source>
</reference>
<reference key="2">
    <citation type="journal article" date="2002" name="J. Mol. Microbiol. Biotechnol.">
        <title>The genome of Methanosarcina mazei: evidence for lateral gene transfer between Bacteria and Archaea.</title>
        <authorList>
            <person name="Deppenmeier U."/>
            <person name="Johann A."/>
            <person name="Hartsch T."/>
            <person name="Merkl R."/>
            <person name="Schmitz R.A."/>
            <person name="Martinez-Arias R."/>
            <person name="Henne A."/>
            <person name="Wiezer A."/>
            <person name="Baeumer S."/>
            <person name="Jacobi C."/>
            <person name="Brueggemann H."/>
            <person name="Lienard T."/>
            <person name="Christmann A."/>
            <person name="Boemecke M."/>
            <person name="Steckel S."/>
            <person name="Bhattacharyya A."/>
            <person name="Lykidis A."/>
            <person name="Overbeek R."/>
            <person name="Klenk H.-P."/>
            <person name="Gunsalus R.P."/>
            <person name="Fritz H.-J."/>
            <person name="Gottschalk G."/>
        </authorList>
    </citation>
    <scope>NUCLEOTIDE SEQUENCE [LARGE SCALE GENOMIC DNA]</scope>
    <source>
        <strain>ATCC BAA-159 / DSM 3647 / Goe1 / Go1 / JCM 11833 / OCM 88</strain>
    </source>
</reference>
<proteinExistence type="evidence at protein level"/>